<comment type="function">
    <text evidence="1">Catalyzes the interconversion of L-alanine and D-alanine. May also act on other amino acids.</text>
</comment>
<comment type="catalytic activity">
    <reaction evidence="1">
        <text>L-alanine = D-alanine</text>
        <dbReference type="Rhea" id="RHEA:20249"/>
        <dbReference type="ChEBI" id="CHEBI:57416"/>
        <dbReference type="ChEBI" id="CHEBI:57972"/>
        <dbReference type="EC" id="5.1.1.1"/>
    </reaction>
</comment>
<comment type="cofactor">
    <cofactor evidence="1">
        <name>pyridoxal 5'-phosphate</name>
        <dbReference type="ChEBI" id="CHEBI:597326"/>
    </cofactor>
</comment>
<comment type="pathway">
    <text evidence="1">Amino-acid biosynthesis; D-alanine biosynthesis; D-alanine from L-alanine: step 1/1.</text>
</comment>
<comment type="similarity">
    <text evidence="1">Belongs to the alanine racemase family.</text>
</comment>
<accession>A4W3N5</accession>
<organism>
    <name type="scientific">Streptococcus suis (strain 98HAH33)</name>
    <dbReference type="NCBI Taxonomy" id="391296"/>
    <lineage>
        <taxon>Bacteria</taxon>
        <taxon>Bacillati</taxon>
        <taxon>Bacillota</taxon>
        <taxon>Bacilli</taxon>
        <taxon>Lactobacillales</taxon>
        <taxon>Streptococcaceae</taxon>
        <taxon>Streptococcus</taxon>
    </lineage>
</organism>
<reference key="1">
    <citation type="journal article" date="2007" name="PLoS ONE">
        <title>A glimpse of streptococcal toxic shock syndrome from comparative genomics of S. suis 2 Chinese isolates.</title>
        <authorList>
            <person name="Chen C."/>
            <person name="Tang J."/>
            <person name="Dong W."/>
            <person name="Wang C."/>
            <person name="Feng Y."/>
            <person name="Wang J."/>
            <person name="Zheng F."/>
            <person name="Pan X."/>
            <person name="Liu D."/>
            <person name="Li M."/>
            <person name="Song Y."/>
            <person name="Zhu X."/>
            <person name="Sun H."/>
            <person name="Feng T."/>
            <person name="Guo Z."/>
            <person name="Ju A."/>
            <person name="Ge J."/>
            <person name="Dong Y."/>
            <person name="Sun W."/>
            <person name="Jiang Y."/>
            <person name="Wang J."/>
            <person name="Yan J."/>
            <person name="Yang H."/>
            <person name="Wang X."/>
            <person name="Gao G.F."/>
            <person name="Yang R."/>
            <person name="Wang J."/>
            <person name="Yu J."/>
        </authorList>
    </citation>
    <scope>NUCLEOTIDE SEQUENCE [LARGE SCALE GENOMIC DNA]</scope>
    <source>
        <strain>98HAH33</strain>
    </source>
</reference>
<keyword id="KW-0413">Isomerase</keyword>
<keyword id="KW-0663">Pyridoxal phosphate</keyword>
<proteinExistence type="inferred from homology"/>
<evidence type="ECO:0000255" key="1">
    <source>
        <dbReference type="HAMAP-Rule" id="MF_01201"/>
    </source>
</evidence>
<dbReference type="EC" id="5.1.1.1" evidence="1"/>
<dbReference type="EMBL" id="CP000408">
    <property type="protein sequence ID" value="ABP92974.1"/>
    <property type="molecule type" value="Genomic_DNA"/>
</dbReference>
<dbReference type="SMR" id="A4W3N5"/>
<dbReference type="KEGG" id="ssv:SSU98_1816"/>
<dbReference type="HOGENOM" id="CLU_028393_2_1_9"/>
<dbReference type="UniPathway" id="UPA00042">
    <property type="reaction ID" value="UER00497"/>
</dbReference>
<dbReference type="GO" id="GO:0005829">
    <property type="term" value="C:cytosol"/>
    <property type="evidence" value="ECO:0007669"/>
    <property type="project" value="TreeGrafter"/>
</dbReference>
<dbReference type="GO" id="GO:0008784">
    <property type="term" value="F:alanine racemase activity"/>
    <property type="evidence" value="ECO:0007669"/>
    <property type="project" value="UniProtKB-UniRule"/>
</dbReference>
<dbReference type="GO" id="GO:0030170">
    <property type="term" value="F:pyridoxal phosphate binding"/>
    <property type="evidence" value="ECO:0007669"/>
    <property type="project" value="UniProtKB-UniRule"/>
</dbReference>
<dbReference type="GO" id="GO:0030632">
    <property type="term" value="P:D-alanine biosynthetic process"/>
    <property type="evidence" value="ECO:0007669"/>
    <property type="project" value="UniProtKB-UniRule"/>
</dbReference>
<dbReference type="GO" id="GO:0009252">
    <property type="term" value="P:peptidoglycan biosynthetic process"/>
    <property type="evidence" value="ECO:0007669"/>
    <property type="project" value="TreeGrafter"/>
</dbReference>
<dbReference type="CDD" id="cd00430">
    <property type="entry name" value="PLPDE_III_AR"/>
    <property type="match status" value="1"/>
</dbReference>
<dbReference type="FunFam" id="2.40.37.10:FF:000006">
    <property type="entry name" value="Alanine racemase"/>
    <property type="match status" value="1"/>
</dbReference>
<dbReference type="FunFam" id="3.20.20.10:FF:000002">
    <property type="entry name" value="Alanine racemase"/>
    <property type="match status" value="1"/>
</dbReference>
<dbReference type="Gene3D" id="3.20.20.10">
    <property type="entry name" value="Alanine racemase"/>
    <property type="match status" value="1"/>
</dbReference>
<dbReference type="Gene3D" id="2.40.37.10">
    <property type="entry name" value="Lyase, Ornithine Decarboxylase, Chain A, domain 1"/>
    <property type="match status" value="1"/>
</dbReference>
<dbReference type="HAMAP" id="MF_01201">
    <property type="entry name" value="Ala_racemase"/>
    <property type="match status" value="1"/>
</dbReference>
<dbReference type="InterPro" id="IPR000821">
    <property type="entry name" value="Ala_racemase"/>
</dbReference>
<dbReference type="InterPro" id="IPR009006">
    <property type="entry name" value="Ala_racemase/Decarboxylase_C"/>
</dbReference>
<dbReference type="InterPro" id="IPR011079">
    <property type="entry name" value="Ala_racemase_C"/>
</dbReference>
<dbReference type="InterPro" id="IPR001608">
    <property type="entry name" value="Ala_racemase_N"/>
</dbReference>
<dbReference type="InterPro" id="IPR020622">
    <property type="entry name" value="Ala_racemase_pyridoxalP-BS"/>
</dbReference>
<dbReference type="InterPro" id="IPR029066">
    <property type="entry name" value="PLP-binding_barrel"/>
</dbReference>
<dbReference type="NCBIfam" id="TIGR00492">
    <property type="entry name" value="alr"/>
    <property type="match status" value="1"/>
</dbReference>
<dbReference type="PANTHER" id="PTHR30511">
    <property type="entry name" value="ALANINE RACEMASE"/>
    <property type="match status" value="1"/>
</dbReference>
<dbReference type="PANTHER" id="PTHR30511:SF0">
    <property type="entry name" value="ALANINE RACEMASE, CATABOLIC-RELATED"/>
    <property type="match status" value="1"/>
</dbReference>
<dbReference type="Pfam" id="PF00842">
    <property type="entry name" value="Ala_racemase_C"/>
    <property type="match status" value="1"/>
</dbReference>
<dbReference type="Pfam" id="PF01168">
    <property type="entry name" value="Ala_racemase_N"/>
    <property type="match status" value="1"/>
</dbReference>
<dbReference type="PRINTS" id="PR00992">
    <property type="entry name" value="ALARACEMASE"/>
</dbReference>
<dbReference type="SMART" id="SM01005">
    <property type="entry name" value="Ala_racemase_C"/>
    <property type="match status" value="1"/>
</dbReference>
<dbReference type="SUPFAM" id="SSF50621">
    <property type="entry name" value="Alanine racemase C-terminal domain-like"/>
    <property type="match status" value="1"/>
</dbReference>
<dbReference type="SUPFAM" id="SSF51419">
    <property type="entry name" value="PLP-binding barrel"/>
    <property type="match status" value="1"/>
</dbReference>
<dbReference type="PROSITE" id="PS00395">
    <property type="entry name" value="ALANINE_RACEMASE"/>
    <property type="match status" value="1"/>
</dbReference>
<sequence length="367" mass="40211">MIESEHRPTQIRVNLDAIAENFEQVMTNLPPKTEAFAVVKANAYGHGAVAVAKKLSSQAAGFCVSNLDEALELRKAGIEHPILILGVVPVRFLPVAHQLNISVTVASLDWLQDAKDLEADLSGLTVHLKLDTGMGRIGFRKIADLLQAIAILEELEYDIEGVYTHFATADEVEQAHFESQLSVFKEFLDVLPITPRWIHASNSATSIWHADTVFNLVRLGNILYGLNPSGRVLELPFGVQPALSLVSEIVHVKQVEAGTTIGYGATYHSTDSEWIATVPIGYADGLVRSLQGLSVLVDGQACEIVGRISMDQITIRLPRAYPLGQKVTLIGQDGDKTISVQEWADRIGTINYEVVCLLTDRLPRIFE</sequence>
<protein>
    <recommendedName>
        <fullName evidence="1">Alanine racemase</fullName>
        <ecNumber evidence="1">5.1.1.1</ecNumber>
    </recommendedName>
</protein>
<gene>
    <name type="primary">alr</name>
    <name type="ordered locus">SSU98_1816</name>
</gene>
<name>ALR_STRS2</name>
<feature type="chain" id="PRO_1000066052" description="Alanine racemase">
    <location>
        <begin position="1"/>
        <end position="367"/>
    </location>
</feature>
<feature type="active site" description="Proton acceptor; specific for D-alanine" evidence="1">
    <location>
        <position position="40"/>
    </location>
</feature>
<feature type="active site" description="Proton acceptor; specific for L-alanine" evidence="1">
    <location>
        <position position="263"/>
    </location>
</feature>
<feature type="binding site" evidence="1">
    <location>
        <position position="136"/>
    </location>
    <ligand>
        <name>substrate</name>
    </ligand>
</feature>
<feature type="binding site" evidence="1">
    <location>
        <position position="310"/>
    </location>
    <ligand>
        <name>substrate</name>
    </ligand>
</feature>
<feature type="modified residue" description="N6-(pyridoxal phosphate)lysine" evidence="1">
    <location>
        <position position="40"/>
    </location>
</feature>